<gene>
    <name evidence="1" type="primary">aspS</name>
    <name type="ordered locus">LL1965</name>
    <name type="ORF">L0346</name>
</gene>
<protein>
    <recommendedName>
        <fullName evidence="1">Aspartate--tRNA ligase</fullName>
        <ecNumber evidence="1">6.1.1.12</ecNumber>
    </recommendedName>
    <alternativeName>
        <fullName evidence="1">Aspartyl-tRNA synthetase</fullName>
        <shortName evidence="1">AspRS</shortName>
    </alternativeName>
</protein>
<sequence length="590" mass="66545">MKRTNYAGNITEEYLNQTVTVKGWVAKRRNLGGLIFIDLRDREGIVQIVVNPETAAADVAEAADKARNEFVLEVTGKVVERASKNDKIKTGGIEIEATAIEILSTSKTTPFEIKDDVEVLDDTRLKYRYLDLRRPEMLKNITMRHATTRSIREYLDGAGFIDVETPFLNKSTPEGARDYLVPSRVNKGEFYALPQSPQLMKQLLMTAGLDRYYQIVKCFRDEDLRGDRQPEFTQVDLETSFLSEEEIQDLTEELIAKVMKDVKGIDVTLPFPRMKYDDAMNFYGSDKPDTRFELLLTDLSALAKTIDFKVFQEAEVVKAIVVKDAADKYSRKSIDKLTEQAKQNGAKGLAWVKFEKGEFAGGVSKFLAESTDSFVNELKLTDNDLVLFVADSLDVANSALGALRLTIGKQQGLIDFRQFNFLWVIDWPMFEWSDEEERYMSAHHPFTLPTKETQAFLSADGHSKDSDLKKVRAHAYDIVLNGYELGGGSLRINTRQLQEEMLSALGFKLEDANEQFGFLLEALDYGFPPHGGLALGLDRFVMLLAGKDNIREVIAFPKNNKASDPMTQAPSIVAEKQLEELSIKLANKDQ</sequence>
<keyword id="KW-0030">Aminoacyl-tRNA synthetase</keyword>
<keyword id="KW-0067">ATP-binding</keyword>
<keyword id="KW-0963">Cytoplasm</keyword>
<keyword id="KW-0436">Ligase</keyword>
<keyword id="KW-0547">Nucleotide-binding</keyword>
<keyword id="KW-0648">Protein biosynthesis</keyword>
<keyword id="KW-1185">Reference proteome</keyword>
<proteinExistence type="inferred from homology"/>
<organism>
    <name type="scientific">Lactococcus lactis subsp. lactis (strain IL1403)</name>
    <name type="common">Streptococcus lactis</name>
    <dbReference type="NCBI Taxonomy" id="272623"/>
    <lineage>
        <taxon>Bacteria</taxon>
        <taxon>Bacillati</taxon>
        <taxon>Bacillota</taxon>
        <taxon>Bacilli</taxon>
        <taxon>Lactobacillales</taxon>
        <taxon>Streptococcaceae</taxon>
        <taxon>Lactococcus</taxon>
    </lineage>
</organism>
<reference key="1">
    <citation type="journal article" date="2001" name="Genome Res.">
        <title>The complete genome sequence of the lactic acid bacterium Lactococcus lactis ssp. lactis IL1403.</title>
        <authorList>
            <person name="Bolotin A."/>
            <person name="Wincker P."/>
            <person name="Mauger S."/>
            <person name="Jaillon O."/>
            <person name="Malarme K."/>
            <person name="Weissenbach J."/>
            <person name="Ehrlich S.D."/>
            <person name="Sorokin A."/>
        </authorList>
    </citation>
    <scope>NUCLEOTIDE SEQUENCE [LARGE SCALE GENOMIC DNA]</scope>
    <source>
        <strain>IL1403</strain>
    </source>
</reference>
<name>SYD_LACLA</name>
<evidence type="ECO:0000255" key="1">
    <source>
        <dbReference type="HAMAP-Rule" id="MF_00044"/>
    </source>
</evidence>
<accession>Q9CE80</accession>
<dbReference type="EC" id="6.1.1.12" evidence="1"/>
<dbReference type="EMBL" id="AE005176">
    <property type="protein sequence ID" value="AAK06063.1"/>
    <property type="molecule type" value="Genomic_DNA"/>
</dbReference>
<dbReference type="PIR" id="E86870">
    <property type="entry name" value="E86870"/>
</dbReference>
<dbReference type="RefSeq" id="NP_268122.1">
    <property type="nucleotide sequence ID" value="NC_002662.1"/>
</dbReference>
<dbReference type="RefSeq" id="WP_004254782.1">
    <property type="nucleotide sequence ID" value="NC_002662.1"/>
</dbReference>
<dbReference type="SMR" id="Q9CE80"/>
<dbReference type="PaxDb" id="272623-L0346"/>
<dbReference type="EnsemblBacteria" id="AAK06063">
    <property type="protein sequence ID" value="AAK06063"/>
    <property type="gene ID" value="L0346"/>
</dbReference>
<dbReference type="KEGG" id="lla:L0346"/>
<dbReference type="PATRIC" id="fig|272623.7.peg.2116"/>
<dbReference type="eggNOG" id="COG0173">
    <property type="taxonomic scope" value="Bacteria"/>
</dbReference>
<dbReference type="HOGENOM" id="CLU_014330_3_2_9"/>
<dbReference type="OrthoDB" id="9802326at2"/>
<dbReference type="Proteomes" id="UP000002196">
    <property type="component" value="Chromosome"/>
</dbReference>
<dbReference type="GO" id="GO:0005737">
    <property type="term" value="C:cytoplasm"/>
    <property type="evidence" value="ECO:0007669"/>
    <property type="project" value="UniProtKB-SubCell"/>
</dbReference>
<dbReference type="GO" id="GO:0004815">
    <property type="term" value="F:aspartate-tRNA ligase activity"/>
    <property type="evidence" value="ECO:0007669"/>
    <property type="project" value="UniProtKB-UniRule"/>
</dbReference>
<dbReference type="GO" id="GO:0005524">
    <property type="term" value="F:ATP binding"/>
    <property type="evidence" value="ECO:0007669"/>
    <property type="project" value="UniProtKB-UniRule"/>
</dbReference>
<dbReference type="GO" id="GO:0140096">
    <property type="term" value="F:catalytic activity, acting on a protein"/>
    <property type="evidence" value="ECO:0007669"/>
    <property type="project" value="UniProtKB-ARBA"/>
</dbReference>
<dbReference type="GO" id="GO:0003676">
    <property type="term" value="F:nucleic acid binding"/>
    <property type="evidence" value="ECO:0007669"/>
    <property type="project" value="InterPro"/>
</dbReference>
<dbReference type="GO" id="GO:0016740">
    <property type="term" value="F:transferase activity"/>
    <property type="evidence" value="ECO:0007669"/>
    <property type="project" value="UniProtKB-ARBA"/>
</dbReference>
<dbReference type="GO" id="GO:0006422">
    <property type="term" value="P:aspartyl-tRNA aminoacylation"/>
    <property type="evidence" value="ECO:0007669"/>
    <property type="project" value="UniProtKB-UniRule"/>
</dbReference>
<dbReference type="CDD" id="cd00777">
    <property type="entry name" value="AspRS_core"/>
    <property type="match status" value="1"/>
</dbReference>
<dbReference type="CDD" id="cd04317">
    <property type="entry name" value="EcAspRS_like_N"/>
    <property type="match status" value="1"/>
</dbReference>
<dbReference type="Gene3D" id="3.30.930.10">
    <property type="entry name" value="Bira Bifunctional Protein, Domain 2"/>
    <property type="match status" value="1"/>
</dbReference>
<dbReference type="Gene3D" id="3.30.1360.30">
    <property type="entry name" value="GAD-like domain"/>
    <property type="match status" value="1"/>
</dbReference>
<dbReference type="Gene3D" id="2.40.50.140">
    <property type="entry name" value="Nucleic acid-binding proteins"/>
    <property type="match status" value="1"/>
</dbReference>
<dbReference type="HAMAP" id="MF_00044">
    <property type="entry name" value="Asp_tRNA_synth_type1"/>
    <property type="match status" value="1"/>
</dbReference>
<dbReference type="InterPro" id="IPR004364">
    <property type="entry name" value="Aa-tRNA-synt_II"/>
</dbReference>
<dbReference type="InterPro" id="IPR006195">
    <property type="entry name" value="aa-tRNA-synth_II"/>
</dbReference>
<dbReference type="InterPro" id="IPR045864">
    <property type="entry name" value="aa-tRNA-synth_II/BPL/LPL"/>
</dbReference>
<dbReference type="InterPro" id="IPR004524">
    <property type="entry name" value="Asp-tRNA-ligase_1"/>
</dbReference>
<dbReference type="InterPro" id="IPR047089">
    <property type="entry name" value="Asp-tRNA-ligase_1_N"/>
</dbReference>
<dbReference type="InterPro" id="IPR002312">
    <property type="entry name" value="Asp/Asn-tRNA-synth_IIb"/>
</dbReference>
<dbReference type="InterPro" id="IPR047090">
    <property type="entry name" value="AspRS_core"/>
</dbReference>
<dbReference type="InterPro" id="IPR004115">
    <property type="entry name" value="GAD-like_sf"/>
</dbReference>
<dbReference type="InterPro" id="IPR029351">
    <property type="entry name" value="GAD_dom"/>
</dbReference>
<dbReference type="InterPro" id="IPR012340">
    <property type="entry name" value="NA-bd_OB-fold"/>
</dbReference>
<dbReference type="InterPro" id="IPR004365">
    <property type="entry name" value="NA-bd_OB_tRNA"/>
</dbReference>
<dbReference type="NCBIfam" id="TIGR00459">
    <property type="entry name" value="aspS_bact"/>
    <property type="match status" value="1"/>
</dbReference>
<dbReference type="NCBIfam" id="NF001750">
    <property type="entry name" value="PRK00476.1"/>
    <property type="match status" value="1"/>
</dbReference>
<dbReference type="PANTHER" id="PTHR22594:SF5">
    <property type="entry name" value="ASPARTATE--TRNA LIGASE, MITOCHONDRIAL"/>
    <property type="match status" value="1"/>
</dbReference>
<dbReference type="PANTHER" id="PTHR22594">
    <property type="entry name" value="ASPARTYL/LYSYL-TRNA SYNTHETASE"/>
    <property type="match status" value="1"/>
</dbReference>
<dbReference type="Pfam" id="PF02938">
    <property type="entry name" value="GAD"/>
    <property type="match status" value="1"/>
</dbReference>
<dbReference type="Pfam" id="PF00152">
    <property type="entry name" value="tRNA-synt_2"/>
    <property type="match status" value="1"/>
</dbReference>
<dbReference type="Pfam" id="PF01336">
    <property type="entry name" value="tRNA_anti-codon"/>
    <property type="match status" value="1"/>
</dbReference>
<dbReference type="PRINTS" id="PR01042">
    <property type="entry name" value="TRNASYNTHASP"/>
</dbReference>
<dbReference type="SUPFAM" id="SSF55681">
    <property type="entry name" value="Class II aaRS and biotin synthetases"/>
    <property type="match status" value="1"/>
</dbReference>
<dbReference type="SUPFAM" id="SSF55261">
    <property type="entry name" value="GAD domain-like"/>
    <property type="match status" value="1"/>
</dbReference>
<dbReference type="SUPFAM" id="SSF50249">
    <property type="entry name" value="Nucleic acid-binding proteins"/>
    <property type="match status" value="1"/>
</dbReference>
<dbReference type="PROSITE" id="PS50862">
    <property type="entry name" value="AA_TRNA_LIGASE_II"/>
    <property type="match status" value="1"/>
</dbReference>
<comment type="function">
    <text evidence="1">Catalyzes the attachment of L-aspartate to tRNA(Asp) in a two-step reaction: L-aspartate is first activated by ATP to form Asp-AMP and then transferred to the acceptor end of tRNA(Asp).</text>
</comment>
<comment type="catalytic activity">
    <reaction evidence="1">
        <text>tRNA(Asp) + L-aspartate + ATP = L-aspartyl-tRNA(Asp) + AMP + diphosphate</text>
        <dbReference type="Rhea" id="RHEA:19649"/>
        <dbReference type="Rhea" id="RHEA-COMP:9660"/>
        <dbReference type="Rhea" id="RHEA-COMP:9678"/>
        <dbReference type="ChEBI" id="CHEBI:29991"/>
        <dbReference type="ChEBI" id="CHEBI:30616"/>
        <dbReference type="ChEBI" id="CHEBI:33019"/>
        <dbReference type="ChEBI" id="CHEBI:78442"/>
        <dbReference type="ChEBI" id="CHEBI:78516"/>
        <dbReference type="ChEBI" id="CHEBI:456215"/>
        <dbReference type="EC" id="6.1.1.12"/>
    </reaction>
</comment>
<comment type="subunit">
    <text evidence="1">Homodimer.</text>
</comment>
<comment type="subcellular location">
    <subcellularLocation>
        <location evidence="1">Cytoplasm</location>
    </subcellularLocation>
</comment>
<comment type="similarity">
    <text evidence="1">Belongs to the class-II aminoacyl-tRNA synthetase family. Type 1 subfamily.</text>
</comment>
<feature type="chain" id="PRO_0000110887" description="Aspartate--tRNA ligase">
    <location>
        <begin position="1"/>
        <end position="590"/>
    </location>
</feature>
<feature type="region of interest" description="Aspartate" evidence="1">
    <location>
        <begin position="198"/>
        <end position="201"/>
    </location>
</feature>
<feature type="binding site" evidence="1">
    <location>
        <position position="174"/>
    </location>
    <ligand>
        <name>L-aspartate</name>
        <dbReference type="ChEBI" id="CHEBI:29991"/>
    </ligand>
</feature>
<feature type="binding site" evidence="1">
    <location>
        <begin position="220"/>
        <end position="222"/>
    </location>
    <ligand>
        <name>ATP</name>
        <dbReference type="ChEBI" id="CHEBI:30616"/>
    </ligand>
</feature>
<feature type="binding site" evidence="1">
    <location>
        <position position="220"/>
    </location>
    <ligand>
        <name>L-aspartate</name>
        <dbReference type="ChEBI" id="CHEBI:29991"/>
    </ligand>
</feature>
<feature type="binding site" evidence="1">
    <location>
        <position position="229"/>
    </location>
    <ligand>
        <name>ATP</name>
        <dbReference type="ChEBI" id="CHEBI:30616"/>
    </ligand>
</feature>
<feature type="binding site" evidence="1">
    <location>
        <position position="443"/>
    </location>
    <ligand>
        <name>L-aspartate</name>
        <dbReference type="ChEBI" id="CHEBI:29991"/>
    </ligand>
</feature>
<feature type="binding site" evidence="1">
    <location>
        <position position="484"/>
    </location>
    <ligand>
        <name>ATP</name>
        <dbReference type="ChEBI" id="CHEBI:30616"/>
    </ligand>
</feature>
<feature type="binding site" evidence="1">
    <location>
        <position position="491"/>
    </location>
    <ligand>
        <name>L-aspartate</name>
        <dbReference type="ChEBI" id="CHEBI:29991"/>
    </ligand>
</feature>
<feature type="binding site" evidence="1">
    <location>
        <begin position="536"/>
        <end position="539"/>
    </location>
    <ligand>
        <name>ATP</name>
        <dbReference type="ChEBI" id="CHEBI:30616"/>
    </ligand>
</feature>